<name>SYM_BURMA</name>
<evidence type="ECO:0000255" key="1">
    <source>
        <dbReference type="HAMAP-Rule" id="MF_00098"/>
    </source>
</evidence>
<protein>
    <recommendedName>
        <fullName evidence="1">Methionine--tRNA ligase</fullName>
        <ecNumber evidence="1">6.1.1.10</ecNumber>
    </recommendedName>
    <alternativeName>
        <fullName evidence="1">Methionyl-tRNA synthetase</fullName>
        <shortName evidence="1">MetRS</shortName>
    </alternativeName>
</protein>
<keyword id="KW-0030">Aminoacyl-tRNA synthetase</keyword>
<keyword id="KW-0067">ATP-binding</keyword>
<keyword id="KW-0963">Cytoplasm</keyword>
<keyword id="KW-0436">Ligase</keyword>
<keyword id="KW-0479">Metal-binding</keyword>
<keyword id="KW-0547">Nucleotide-binding</keyword>
<keyword id="KW-0648">Protein biosynthesis</keyword>
<keyword id="KW-1185">Reference proteome</keyword>
<keyword id="KW-0694">RNA-binding</keyword>
<keyword id="KW-0820">tRNA-binding</keyword>
<keyword id="KW-0862">Zinc</keyword>
<organism>
    <name type="scientific">Burkholderia mallei (strain ATCC 23344)</name>
    <dbReference type="NCBI Taxonomy" id="243160"/>
    <lineage>
        <taxon>Bacteria</taxon>
        <taxon>Pseudomonadati</taxon>
        <taxon>Pseudomonadota</taxon>
        <taxon>Betaproteobacteria</taxon>
        <taxon>Burkholderiales</taxon>
        <taxon>Burkholderiaceae</taxon>
        <taxon>Burkholderia</taxon>
        <taxon>pseudomallei group</taxon>
    </lineage>
</organism>
<proteinExistence type="inferred from homology"/>
<gene>
    <name evidence="1" type="primary">metG</name>
    <name type="ordered locus">BMA0709</name>
</gene>
<sequence length="725" mass="79884">MSASDLTSVQAGAPQGRRQILVTSALPYANGQIHIGHLVEYIQTDIWVRTMRMHGHEIYYIGADDTHGTPVMLRAEQEGVSPKQLIERVWREHKRDFDSFGVSFDNFYTTDSDENRVLSETIYLALKEAGFIAEREIEQAYDPVRQMFLPDRFIKGECPKCHAKDQYGDSCEVCGTTYQPTDLIHPYSVVSGAAPVRKTSTHYFFRLSDPRCEAFLREWVSGLAQPEATNKMREWLGEAGEAKLADWDISRDAPYFGFEIPGAPGKYFYVWLDAPVGYYASFKNLCQRRGLDFDAWIRKDSTTEQYHFIGKDILYFHTLFWPAMLEFSGHRTPTNVFAHGFLTVDGAKMSKSRGTFITAQSYIDTGLNPEWLRYYFAAKLNATMEDIDLNLEDFQARVNSDLVGKYVNIASRAAGFLLKRFDGRVQASAMNHPLLATLRGAIPQIAAHYEAREYGRALRQTMELADAVNGYVDSAKPWELAKDPANAVALHETCSVSLEAFRLLSLALKPVLPRVAQGVEAFLGIAPLTWADAGTPLSPEQPVRAYQHLMTRVDPKQIDALLAANRGSLQGTAAAAEAGAANGNGAGSKNGKGAKAAAQPAASAANADDGASPIISIDDFAKIDLRIAKIVACQAVEGSDKLLQLTLDVGEERTRNVFSGIKSAYRPEQLVGKLTVMVANLAPRKMKFGLSEGMVLAASAADEKAEPGLYILEPHSGAKPGMRVK</sequence>
<comment type="function">
    <text evidence="1">Is required not only for elongation of protein synthesis but also for the initiation of all mRNA translation through initiator tRNA(fMet) aminoacylation.</text>
</comment>
<comment type="catalytic activity">
    <reaction evidence="1">
        <text>tRNA(Met) + L-methionine + ATP = L-methionyl-tRNA(Met) + AMP + diphosphate</text>
        <dbReference type="Rhea" id="RHEA:13481"/>
        <dbReference type="Rhea" id="RHEA-COMP:9667"/>
        <dbReference type="Rhea" id="RHEA-COMP:9698"/>
        <dbReference type="ChEBI" id="CHEBI:30616"/>
        <dbReference type="ChEBI" id="CHEBI:33019"/>
        <dbReference type="ChEBI" id="CHEBI:57844"/>
        <dbReference type="ChEBI" id="CHEBI:78442"/>
        <dbReference type="ChEBI" id="CHEBI:78530"/>
        <dbReference type="ChEBI" id="CHEBI:456215"/>
        <dbReference type="EC" id="6.1.1.10"/>
    </reaction>
</comment>
<comment type="cofactor">
    <cofactor evidence="1">
        <name>Zn(2+)</name>
        <dbReference type="ChEBI" id="CHEBI:29105"/>
    </cofactor>
    <text evidence="1">Binds 1 zinc ion per subunit.</text>
</comment>
<comment type="subunit">
    <text evidence="1">Homodimer.</text>
</comment>
<comment type="subcellular location">
    <subcellularLocation>
        <location evidence="1">Cytoplasm</location>
    </subcellularLocation>
</comment>
<comment type="similarity">
    <text evidence="1">Belongs to the class-I aminoacyl-tRNA synthetase family. MetG type 1 subfamily.</text>
</comment>
<dbReference type="EC" id="6.1.1.10" evidence="1"/>
<dbReference type="EMBL" id="CP000010">
    <property type="protein sequence ID" value="AAU49230.1"/>
    <property type="molecule type" value="Genomic_DNA"/>
</dbReference>
<dbReference type="RefSeq" id="WP_011203868.1">
    <property type="nucleotide sequence ID" value="NC_006348.1"/>
</dbReference>
<dbReference type="RefSeq" id="YP_102479.1">
    <property type="nucleotide sequence ID" value="NC_006348.1"/>
</dbReference>
<dbReference type="SMR" id="Q62LE0"/>
<dbReference type="GeneID" id="92978470"/>
<dbReference type="KEGG" id="bma:BMA0709"/>
<dbReference type="PATRIC" id="fig|243160.12.peg.729"/>
<dbReference type="eggNOG" id="COG0073">
    <property type="taxonomic scope" value="Bacteria"/>
</dbReference>
<dbReference type="eggNOG" id="COG0143">
    <property type="taxonomic scope" value="Bacteria"/>
</dbReference>
<dbReference type="HOGENOM" id="CLU_009710_7_0_4"/>
<dbReference type="Proteomes" id="UP000006693">
    <property type="component" value="Chromosome 1"/>
</dbReference>
<dbReference type="GO" id="GO:0005829">
    <property type="term" value="C:cytosol"/>
    <property type="evidence" value="ECO:0007669"/>
    <property type="project" value="TreeGrafter"/>
</dbReference>
<dbReference type="GO" id="GO:0005524">
    <property type="term" value="F:ATP binding"/>
    <property type="evidence" value="ECO:0007669"/>
    <property type="project" value="UniProtKB-UniRule"/>
</dbReference>
<dbReference type="GO" id="GO:0046872">
    <property type="term" value="F:metal ion binding"/>
    <property type="evidence" value="ECO:0007669"/>
    <property type="project" value="UniProtKB-KW"/>
</dbReference>
<dbReference type="GO" id="GO:0004825">
    <property type="term" value="F:methionine-tRNA ligase activity"/>
    <property type="evidence" value="ECO:0007669"/>
    <property type="project" value="UniProtKB-UniRule"/>
</dbReference>
<dbReference type="GO" id="GO:0000049">
    <property type="term" value="F:tRNA binding"/>
    <property type="evidence" value="ECO:0007669"/>
    <property type="project" value="UniProtKB-KW"/>
</dbReference>
<dbReference type="GO" id="GO:0006431">
    <property type="term" value="P:methionyl-tRNA aminoacylation"/>
    <property type="evidence" value="ECO:0007669"/>
    <property type="project" value="UniProtKB-UniRule"/>
</dbReference>
<dbReference type="CDD" id="cd07957">
    <property type="entry name" value="Anticodon_Ia_Met"/>
    <property type="match status" value="1"/>
</dbReference>
<dbReference type="CDD" id="cd00814">
    <property type="entry name" value="MetRS_core"/>
    <property type="match status" value="1"/>
</dbReference>
<dbReference type="CDD" id="cd02800">
    <property type="entry name" value="tRNA_bind_EcMetRS_like"/>
    <property type="match status" value="1"/>
</dbReference>
<dbReference type="FunFam" id="2.20.28.20:FF:000001">
    <property type="entry name" value="Methionine--tRNA ligase"/>
    <property type="match status" value="1"/>
</dbReference>
<dbReference type="FunFam" id="2.40.50.140:FF:000042">
    <property type="entry name" value="Methionine--tRNA ligase"/>
    <property type="match status" value="1"/>
</dbReference>
<dbReference type="Gene3D" id="3.40.50.620">
    <property type="entry name" value="HUPs"/>
    <property type="match status" value="1"/>
</dbReference>
<dbReference type="Gene3D" id="1.10.730.10">
    <property type="entry name" value="Isoleucyl-tRNA Synthetase, Domain 1"/>
    <property type="match status" value="1"/>
</dbReference>
<dbReference type="Gene3D" id="2.20.28.20">
    <property type="entry name" value="Methionyl-tRNA synthetase, Zn-domain"/>
    <property type="match status" value="1"/>
</dbReference>
<dbReference type="Gene3D" id="2.40.50.140">
    <property type="entry name" value="Nucleic acid-binding proteins"/>
    <property type="match status" value="1"/>
</dbReference>
<dbReference type="HAMAP" id="MF_00098">
    <property type="entry name" value="Met_tRNA_synth_type1"/>
    <property type="match status" value="1"/>
</dbReference>
<dbReference type="InterPro" id="IPR001412">
    <property type="entry name" value="aa-tRNA-synth_I_CS"/>
</dbReference>
<dbReference type="InterPro" id="IPR041872">
    <property type="entry name" value="Anticodon_Met"/>
</dbReference>
<dbReference type="InterPro" id="IPR004495">
    <property type="entry name" value="Met-tRNA-synth_bsu_C"/>
</dbReference>
<dbReference type="InterPro" id="IPR023458">
    <property type="entry name" value="Met-tRNA_ligase_1"/>
</dbReference>
<dbReference type="InterPro" id="IPR014758">
    <property type="entry name" value="Met-tRNA_synth"/>
</dbReference>
<dbReference type="InterPro" id="IPR015413">
    <property type="entry name" value="Methionyl/Leucyl_tRNA_Synth"/>
</dbReference>
<dbReference type="InterPro" id="IPR033911">
    <property type="entry name" value="MetRS_core"/>
</dbReference>
<dbReference type="InterPro" id="IPR029038">
    <property type="entry name" value="MetRS_Zn"/>
</dbReference>
<dbReference type="InterPro" id="IPR012340">
    <property type="entry name" value="NA-bd_OB-fold"/>
</dbReference>
<dbReference type="InterPro" id="IPR014729">
    <property type="entry name" value="Rossmann-like_a/b/a_fold"/>
</dbReference>
<dbReference type="InterPro" id="IPR002547">
    <property type="entry name" value="tRNA-bd_dom"/>
</dbReference>
<dbReference type="InterPro" id="IPR009080">
    <property type="entry name" value="tRNAsynth_Ia_anticodon-bd"/>
</dbReference>
<dbReference type="NCBIfam" id="TIGR00398">
    <property type="entry name" value="metG"/>
    <property type="match status" value="1"/>
</dbReference>
<dbReference type="NCBIfam" id="TIGR00399">
    <property type="entry name" value="metG_C_term"/>
    <property type="match status" value="1"/>
</dbReference>
<dbReference type="NCBIfam" id="NF001100">
    <property type="entry name" value="PRK00133.1"/>
    <property type="match status" value="1"/>
</dbReference>
<dbReference type="PANTHER" id="PTHR45765">
    <property type="entry name" value="METHIONINE--TRNA LIGASE"/>
    <property type="match status" value="1"/>
</dbReference>
<dbReference type="PANTHER" id="PTHR45765:SF1">
    <property type="entry name" value="METHIONINE--TRNA LIGASE, CYTOPLASMIC"/>
    <property type="match status" value="1"/>
</dbReference>
<dbReference type="Pfam" id="PF19303">
    <property type="entry name" value="Anticodon_3"/>
    <property type="match status" value="1"/>
</dbReference>
<dbReference type="Pfam" id="PF09334">
    <property type="entry name" value="tRNA-synt_1g"/>
    <property type="match status" value="1"/>
</dbReference>
<dbReference type="Pfam" id="PF01588">
    <property type="entry name" value="tRNA_bind"/>
    <property type="match status" value="1"/>
</dbReference>
<dbReference type="PRINTS" id="PR01041">
    <property type="entry name" value="TRNASYNTHMET"/>
</dbReference>
<dbReference type="SUPFAM" id="SSF47323">
    <property type="entry name" value="Anticodon-binding domain of a subclass of class I aminoacyl-tRNA synthetases"/>
    <property type="match status" value="1"/>
</dbReference>
<dbReference type="SUPFAM" id="SSF57770">
    <property type="entry name" value="Methionyl-tRNA synthetase (MetRS), Zn-domain"/>
    <property type="match status" value="1"/>
</dbReference>
<dbReference type="SUPFAM" id="SSF50249">
    <property type="entry name" value="Nucleic acid-binding proteins"/>
    <property type="match status" value="1"/>
</dbReference>
<dbReference type="SUPFAM" id="SSF52374">
    <property type="entry name" value="Nucleotidylyl transferase"/>
    <property type="match status" value="1"/>
</dbReference>
<dbReference type="PROSITE" id="PS00178">
    <property type="entry name" value="AA_TRNA_LIGASE_I"/>
    <property type="match status" value="1"/>
</dbReference>
<dbReference type="PROSITE" id="PS50886">
    <property type="entry name" value="TRBD"/>
    <property type="match status" value="1"/>
</dbReference>
<accession>Q62LE0</accession>
<feature type="chain" id="PRO_0000139114" description="Methionine--tRNA ligase">
    <location>
        <begin position="1"/>
        <end position="725"/>
    </location>
</feature>
<feature type="domain" description="tRNA-binding" evidence="1">
    <location>
        <begin position="619"/>
        <end position="725"/>
    </location>
</feature>
<feature type="short sequence motif" description="'HIGH' region">
    <location>
        <begin position="27"/>
        <end position="37"/>
    </location>
</feature>
<feature type="short sequence motif" description="'KMSKS' region">
    <location>
        <begin position="348"/>
        <end position="352"/>
    </location>
</feature>
<feature type="binding site" evidence="1">
    <location>
        <position position="158"/>
    </location>
    <ligand>
        <name>Zn(2+)</name>
        <dbReference type="ChEBI" id="CHEBI:29105"/>
    </ligand>
</feature>
<feature type="binding site" evidence="1">
    <location>
        <position position="161"/>
    </location>
    <ligand>
        <name>Zn(2+)</name>
        <dbReference type="ChEBI" id="CHEBI:29105"/>
    </ligand>
</feature>
<feature type="binding site" evidence="1">
    <location>
        <position position="171"/>
    </location>
    <ligand>
        <name>Zn(2+)</name>
        <dbReference type="ChEBI" id="CHEBI:29105"/>
    </ligand>
</feature>
<feature type="binding site" evidence="1">
    <location>
        <position position="174"/>
    </location>
    <ligand>
        <name>Zn(2+)</name>
        <dbReference type="ChEBI" id="CHEBI:29105"/>
    </ligand>
</feature>
<feature type="binding site" evidence="1">
    <location>
        <position position="351"/>
    </location>
    <ligand>
        <name>ATP</name>
        <dbReference type="ChEBI" id="CHEBI:30616"/>
    </ligand>
</feature>
<reference key="1">
    <citation type="journal article" date="2004" name="Proc. Natl. Acad. Sci. U.S.A.">
        <title>Structural flexibility in the Burkholderia mallei genome.</title>
        <authorList>
            <person name="Nierman W.C."/>
            <person name="DeShazer D."/>
            <person name="Kim H.S."/>
            <person name="Tettelin H."/>
            <person name="Nelson K.E."/>
            <person name="Feldblyum T.V."/>
            <person name="Ulrich R.L."/>
            <person name="Ronning C.M."/>
            <person name="Brinkac L.M."/>
            <person name="Daugherty S.C."/>
            <person name="Davidsen T.D."/>
            <person name="DeBoy R.T."/>
            <person name="Dimitrov G."/>
            <person name="Dodson R.J."/>
            <person name="Durkin A.S."/>
            <person name="Gwinn M.L."/>
            <person name="Haft D.H."/>
            <person name="Khouri H.M."/>
            <person name="Kolonay J.F."/>
            <person name="Madupu R."/>
            <person name="Mohammoud Y."/>
            <person name="Nelson W.C."/>
            <person name="Radune D."/>
            <person name="Romero C.M."/>
            <person name="Sarria S."/>
            <person name="Selengut J."/>
            <person name="Shamblin C."/>
            <person name="Sullivan S.A."/>
            <person name="White O."/>
            <person name="Yu Y."/>
            <person name="Zafar N."/>
            <person name="Zhou L."/>
            <person name="Fraser C.M."/>
        </authorList>
    </citation>
    <scope>NUCLEOTIDE SEQUENCE [LARGE SCALE GENOMIC DNA]</scope>
    <source>
        <strain>ATCC 23344</strain>
    </source>
</reference>